<name>MURI_LEPIN</name>
<organism>
    <name type="scientific">Leptospira interrogans serogroup Icterohaemorrhagiae serovar Lai (strain 56601)</name>
    <dbReference type="NCBI Taxonomy" id="189518"/>
    <lineage>
        <taxon>Bacteria</taxon>
        <taxon>Pseudomonadati</taxon>
        <taxon>Spirochaetota</taxon>
        <taxon>Spirochaetia</taxon>
        <taxon>Leptospirales</taxon>
        <taxon>Leptospiraceae</taxon>
        <taxon>Leptospira</taxon>
    </lineage>
</organism>
<dbReference type="EC" id="5.1.1.3" evidence="1"/>
<dbReference type="EMBL" id="AE010300">
    <property type="protein sequence ID" value="AAN50249.1"/>
    <property type="molecule type" value="Genomic_DNA"/>
</dbReference>
<dbReference type="RefSeq" id="NP_713231.1">
    <property type="nucleotide sequence ID" value="NC_004342.2"/>
</dbReference>
<dbReference type="RefSeq" id="WP_000662655.1">
    <property type="nucleotide sequence ID" value="NC_004342.2"/>
</dbReference>
<dbReference type="SMR" id="Q8F1S7"/>
<dbReference type="FunCoup" id="Q8F1S7">
    <property type="interactions" value="198"/>
</dbReference>
<dbReference type="STRING" id="189518.LA_3051"/>
<dbReference type="PaxDb" id="189518-LA_3051"/>
<dbReference type="EnsemblBacteria" id="AAN50249">
    <property type="protein sequence ID" value="AAN50249"/>
    <property type="gene ID" value="LA_3051"/>
</dbReference>
<dbReference type="KEGG" id="lil:LA_3051"/>
<dbReference type="PATRIC" id="fig|189518.3.peg.3030"/>
<dbReference type="HOGENOM" id="CLU_052344_1_0_12"/>
<dbReference type="InParanoid" id="Q8F1S7"/>
<dbReference type="OrthoDB" id="9801055at2"/>
<dbReference type="UniPathway" id="UPA00219"/>
<dbReference type="Proteomes" id="UP000001408">
    <property type="component" value="Chromosome I"/>
</dbReference>
<dbReference type="GO" id="GO:0047661">
    <property type="term" value="F:amino-acid racemase activity"/>
    <property type="evidence" value="ECO:0000318"/>
    <property type="project" value="GO_Central"/>
</dbReference>
<dbReference type="GO" id="GO:0008881">
    <property type="term" value="F:glutamate racemase activity"/>
    <property type="evidence" value="ECO:0007669"/>
    <property type="project" value="UniProtKB-UniRule"/>
</dbReference>
<dbReference type="GO" id="GO:0071555">
    <property type="term" value="P:cell wall organization"/>
    <property type="evidence" value="ECO:0007669"/>
    <property type="project" value="UniProtKB-KW"/>
</dbReference>
<dbReference type="GO" id="GO:0009252">
    <property type="term" value="P:peptidoglycan biosynthetic process"/>
    <property type="evidence" value="ECO:0000318"/>
    <property type="project" value="GO_Central"/>
</dbReference>
<dbReference type="GO" id="GO:0008360">
    <property type="term" value="P:regulation of cell shape"/>
    <property type="evidence" value="ECO:0007669"/>
    <property type="project" value="UniProtKB-KW"/>
</dbReference>
<dbReference type="Gene3D" id="3.40.50.1860">
    <property type="match status" value="2"/>
</dbReference>
<dbReference type="HAMAP" id="MF_00258">
    <property type="entry name" value="Glu_racemase"/>
    <property type="match status" value="1"/>
</dbReference>
<dbReference type="InterPro" id="IPR015942">
    <property type="entry name" value="Asp/Glu/hydantoin_racemase"/>
</dbReference>
<dbReference type="InterPro" id="IPR001920">
    <property type="entry name" value="Asp/Glu_race"/>
</dbReference>
<dbReference type="InterPro" id="IPR004391">
    <property type="entry name" value="Glu_race"/>
</dbReference>
<dbReference type="NCBIfam" id="TIGR00067">
    <property type="entry name" value="glut_race"/>
    <property type="match status" value="1"/>
</dbReference>
<dbReference type="PANTHER" id="PTHR21198">
    <property type="entry name" value="GLUTAMATE RACEMASE"/>
    <property type="match status" value="1"/>
</dbReference>
<dbReference type="PANTHER" id="PTHR21198:SF3">
    <property type="entry name" value="GLUTAMATE RACEMASE"/>
    <property type="match status" value="1"/>
</dbReference>
<dbReference type="Pfam" id="PF01177">
    <property type="entry name" value="Asp_Glu_race"/>
    <property type="match status" value="1"/>
</dbReference>
<dbReference type="SUPFAM" id="SSF53681">
    <property type="entry name" value="Aspartate/glutamate racemase"/>
    <property type="match status" value="2"/>
</dbReference>
<comment type="function">
    <text evidence="1">Provides the (R)-glutamate required for cell wall biosynthesis.</text>
</comment>
<comment type="catalytic activity">
    <reaction evidence="1">
        <text>L-glutamate = D-glutamate</text>
        <dbReference type="Rhea" id="RHEA:12813"/>
        <dbReference type="ChEBI" id="CHEBI:29985"/>
        <dbReference type="ChEBI" id="CHEBI:29986"/>
        <dbReference type="EC" id="5.1.1.3"/>
    </reaction>
</comment>
<comment type="pathway">
    <text evidence="1">Cell wall biogenesis; peptidoglycan biosynthesis.</text>
</comment>
<comment type="similarity">
    <text evidence="1">Belongs to the aspartate/glutamate racemases family.</text>
</comment>
<reference key="1">
    <citation type="journal article" date="2003" name="Nature">
        <title>Unique physiological and pathogenic features of Leptospira interrogans revealed by whole-genome sequencing.</title>
        <authorList>
            <person name="Ren S.-X."/>
            <person name="Fu G."/>
            <person name="Jiang X.-G."/>
            <person name="Zeng R."/>
            <person name="Miao Y.-G."/>
            <person name="Xu H."/>
            <person name="Zhang Y.-X."/>
            <person name="Xiong H."/>
            <person name="Lu G."/>
            <person name="Lu L.-F."/>
            <person name="Jiang H.-Q."/>
            <person name="Jia J."/>
            <person name="Tu Y.-F."/>
            <person name="Jiang J.-X."/>
            <person name="Gu W.-Y."/>
            <person name="Zhang Y.-Q."/>
            <person name="Cai Z."/>
            <person name="Sheng H.-H."/>
            <person name="Yin H.-F."/>
            <person name="Zhang Y."/>
            <person name="Zhu G.-F."/>
            <person name="Wan M."/>
            <person name="Huang H.-L."/>
            <person name="Qian Z."/>
            <person name="Wang S.-Y."/>
            <person name="Ma W."/>
            <person name="Yao Z.-J."/>
            <person name="Shen Y."/>
            <person name="Qiang B.-Q."/>
            <person name="Xia Q.-C."/>
            <person name="Guo X.-K."/>
            <person name="Danchin A."/>
            <person name="Saint Girons I."/>
            <person name="Somerville R.L."/>
            <person name="Wen Y.-M."/>
            <person name="Shi M.-H."/>
            <person name="Chen Z."/>
            <person name="Xu J.-G."/>
            <person name="Zhao G.-P."/>
        </authorList>
    </citation>
    <scope>NUCLEOTIDE SEQUENCE [LARGE SCALE GENOMIC DNA]</scope>
    <source>
        <strain>56601</strain>
    </source>
</reference>
<feature type="chain" id="PRO_0000095484" description="Glutamate racemase">
    <location>
        <begin position="1"/>
        <end position="256"/>
    </location>
</feature>
<feature type="active site" description="Proton donor/acceptor" evidence="1">
    <location>
        <position position="74"/>
    </location>
</feature>
<feature type="active site" description="Proton donor/acceptor" evidence="1">
    <location>
        <position position="182"/>
    </location>
</feature>
<feature type="binding site" evidence="1">
    <location>
        <begin position="11"/>
        <end position="12"/>
    </location>
    <ligand>
        <name>substrate</name>
    </ligand>
</feature>
<feature type="binding site" evidence="1">
    <location>
        <begin position="43"/>
        <end position="44"/>
    </location>
    <ligand>
        <name>substrate</name>
    </ligand>
</feature>
<feature type="binding site" evidence="1">
    <location>
        <begin position="75"/>
        <end position="76"/>
    </location>
    <ligand>
        <name>substrate</name>
    </ligand>
</feature>
<feature type="binding site" evidence="1">
    <location>
        <begin position="183"/>
        <end position="184"/>
    </location>
    <ligand>
        <name>substrate</name>
    </ligand>
</feature>
<proteinExistence type="inferred from homology"/>
<evidence type="ECO:0000255" key="1">
    <source>
        <dbReference type="HAMAP-Rule" id="MF_00258"/>
    </source>
</evidence>
<keyword id="KW-0133">Cell shape</keyword>
<keyword id="KW-0961">Cell wall biogenesis/degradation</keyword>
<keyword id="KW-0413">Isomerase</keyword>
<keyword id="KW-0573">Peptidoglycan synthesis</keyword>
<keyword id="KW-1185">Reference proteome</keyword>
<protein>
    <recommendedName>
        <fullName evidence="1">Glutamate racemase</fullName>
        <ecNumber evidence="1">5.1.1.3</ecNumber>
    </recommendedName>
</protein>
<accession>Q8F1S7</accession>
<sequence>MKEPLKIGLMDSGMGGLSVLKELLKYDSELEIVYYGDLKNSPYGEKDASEVLELVRSVCNFLQKENVSAILLACNTATSAAAQTLRKEFSIPIFGMEPAIKPAILQNPGKKVALLATPVTQREEKLQRLKSELKAEELVLSISCPGLAGLVDQGDFDKAEKYLRPILANLQEQDVENLVLGCTHYVFLKQIILKNFPNVKIYDGNSGTIKHLLNSLQVPRVILNGSQNNRSIYKLILNSEKEFHFRLASELLSLKE</sequence>
<gene>
    <name evidence="1" type="primary">murI</name>
    <name type="ordered locus">LA_3051</name>
</gene>